<name>AROK_NITMU</name>
<organism>
    <name type="scientific">Nitrosospira multiformis (strain ATCC 25196 / NCIMB 11849 / C 71)</name>
    <dbReference type="NCBI Taxonomy" id="323848"/>
    <lineage>
        <taxon>Bacteria</taxon>
        <taxon>Pseudomonadati</taxon>
        <taxon>Pseudomonadota</taxon>
        <taxon>Betaproteobacteria</taxon>
        <taxon>Nitrosomonadales</taxon>
        <taxon>Nitrosomonadaceae</taxon>
        <taxon>Nitrosospira</taxon>
    </lineage>
</organism>
<comment type="function">
    <text evidence="1">Catalyzes the specific phosphorylation of the 3-hydroxyl group of shikimic acid using ATP as a cosubstrate.</text>
</comment>
<comment type="catalytic activity">
    <reaction evidence="1">
        <text>shikimate + ATP = 3-phosphoshikimate + ADP + H(+)</text>
        <dbReference type="Rhea" id="RHEA:13121"/>
        <dbReference type="ChEBI" id="CHEBI:15378"/>
        <dbReference type="ChEBI" id="CHEBI:30616"/>
        <dbReference type="ChEBI" id="CHEBI:36208"/>
        <dbReference type="ChEBI" id="CHEBI:145989"/>
        <dbReference type="ChEBI" id="CHEBI:456216"/>
        <dbReference type="EC" id="2.7.1.71"/>
    </reaction>
</comment>
<comment type="cofactor">
    <cofactor evidence="1">
        <name>Mg(2+)</name>
        <dbReference type="ChEBI" id="CHEBI:18420"/>
    </cofactor>
    <text evidence="1">Binds 1 Mg(2+) ion per subunit.</text>
</comment>
<comment type="pathway">
    <text evidence="1">Metabolic intermediate biosynthesis; chorismate biosynthesis; chorismate from D-erythrose 4-phosphate and phosphoenolpyruvate: step 5/7.</text>
</comment>
<comment type="subunit">
    <text evidence="1">Monomer.</text>
</comment>
<comment type="subcellular location">
    <subcellularLocation>
        <location evidence="1">Cytoplasm</location>
    </subcellularLocation>
</comment>
<comment type="similarity">
    <text evidence="1">Belongs to the shikimate kinase family.</text>
</comment>
<reference key="1">
    <citation type="submission" date="2005-08" db="EMBL/GenBank/DDBJ databases">
        <title>Complete sequence of chromosome 1 of Nitrosospira multiformis ATCC 25196.</title>
        <authorList>
            <person name="Copeland A."/>
            <person name="Lucas S."/>
            <person name="Lapidus A."/>
            <person name="Barry K."/>
            <person name="Detter J.C."/>
            <person name="Glavina T."/>
            <person name="Hammon N."/>
            <person name="Israni S."/>
            <person name="Pitluck S."/>
            <person name="Chain P."/>
            <person name="Malfatti S."/>
            <person name="Shin M."/>
            <person name="Vergez L."/>
            <person name="Schmutz J."/>
            <person name="Larimer F."/>
            <person name="Land M."/>
            <person name="Hauser L."/>
            <person name="Kyrpides N."/>
            <person name="Lykidis A."/>
            <person name="Richardson P."/>
        </authorList>
    </citation>
    <scope>NUCLEOTIDE SEQUENCE [LARGE SCALE GENOMIC DNA]</scope>
    <source>
        <strain>ATCC 25196 / NCIMB 11849 / C 71</strain>
    </source>
</reference>
<evidence type="ECO:0000255" key="1">
    <source>
        <dbReference type="HAMAP-Rule" id="MF_00109"/>
    </source>
</evidence>
<dbReference type="EC" id="2.7.1.71" evidence="1"/>
<dbReference type="EMBL" id="CP000103">
    <property type="protein sequence ID" value="ABB73959.1"/>
    <property type="molecule type" value="Genomic_DNA"/>
</dbReference>
<dbReference type="RefSeq" id="WP_011380009.1">
    <property type="nucleotide sequence ID" value="NC_007614.1"/>
</dbReference>
<dbReference type="SMR" id="Q2YBB2"/>
<dbReference type="STRING" id="323848.Nmul_A0652"/>
<dbReference type="KEGG" id="nmu:Nmul_A0652"/>
<dbReference type="eggNOG" id="COG0703">
    <property type="taxonomic scope" value="Bacteria"/>
</dbReference>
<dbReference type="HOGENOM" id="CLU_057607_2_2_4"/>
<dbReference type="UniPathway" id="UPA00053">
    <property type="reaction ID" value="UER00088"/>
</dbReference>
<dbReference type="Proteomes" id="UP000002718">
    <property type="component" value="Chromosome"/>
</dbReference>
<dbReference type="GO" id="GO:0005829">
    <property type="term" value="C:cytosol"/>
    <property type="evidence" value="ECO:0007669"/>
    <property type="project" value="TreeGrafter"/>
</dbReference>
<dbReference type="GO" id="GO:0005524">
    <property type="term" value="F:ATP binding"/>
    <property type="evidence" value="ECO:0007669"/>
    <property type="project" value="UniProtKB-UniRule"/>
</dbReference>
<dbReference type="GO" id="GO:0000287">
    <property type="term" value="F:magnesium ion binding"/>
    <property type="evidence" value="ECO:0007669"/>
    <property type="project" value="UniProtKB-UniRule"/>
</dbReference>
<dbReference type="GO" id="GO:0004765">
    <property type="term" value="F:shikimate kinase activity"/>
    <property type="evidence" value="ECO:0007669"/>
    <property type="project" value="UniProtKB-UniRule"/>
</dbReference>
<dbReference type="GO" id="GO:0008652">
    <property type="term" value="P:amino acid biosynthetic process"/>
    <property type="evidence" value="ECO:0007669"/>
    <property type="project" value="UniProtKB-KW"/>
</dbReference>
<dbReference type="GO" id="GO:0009073">
    <property type="term" value="P:aromatic amino acid family biosynthetic process"/>
    <property type="evidence" value="ECO:0007669"/>
    <property type="project" value="UniProtKB-KW"/>
</dbReference>
<dbReference type="GO" id="GO:0009423">
    <property type="term" value="P:chorismate biosynthetic process"/>
    <property type="evidence" value="ECO:0007669"/>
    <property type="project" value="UniProtKB-UniRule"/>
</dbReference>
<dbReference type="CDD" id="cd00464">
    <property type="entry name" value="SK"/>
    <property type="match status" value="1"/>
</dbReference>
<dbReference type="Gene3D" id="3.40.50.300">
    <property type="entry name" value="P-loop containing nucleotide triphosphate hydrolases"/>
    <property type="match status" value="1"/>
</dbReference>
<dbReference type="HAMAP" id="MF_00109">
    <property type="entry name" value="Shikimate_kinase"/>
    <property type="match status" value="1"/>
</dbReference>
<dbReference type="InterPro" id="IPR027417">
    <property type="entry name" value="P-loop_NTPase"/>
</dbReference>
<dbReference type="InterPro" id="IPR031322">
    <property type="entry name" value="Shikimate/glucono_kinase"/>
</dbReference>
<dbReference type="InterPro" id="IPR000623">
    <property type="entry name" value="Shikimate_kinase/TSH1"/>
</dbReference>
<dbReference type="InterPro" id="IPR023000">
    <property type="entry name" value="Shikimate_kinase_CS"/>
</dbReference>
<dbReference type="PANTHER" id="PTHR21087">
    <property type="entry name" value="SHIKIMATE KINASE"/>
    <property type="match status" value="1"/>
</dbReference>
<dbReference type="PANTHER" id="PTHR21087:SF16">
    <property type="entry name" value="SHIKIMATE KINASE 1, CHLOROPLASTIC"/>
    <property type="match status" value="1"/>
</dbReference>
<dbReference type="Pfam" id="PF01202">
    <property type="entry name" value="SKI"/>
    <property type="match status" value="1"/>
</dbReference>
<dbReference type="PRINTS" id="PR01100">
    <property type="entry name" value="SHIKIMTKNASE"/>
</dbReference>
<dbReference type="SUPFAM" id="SSF52540">
    <property type="entry name" value="P-loop containing nucleoside triphosphate hydrolases"/>
    <property type="match status" value="1"/>
</dbReference>
<dbReference type="PROSITE" id="PS01128">
    <property type="entry name" value="SHIKIMATE_KINASE"/>
    <property type="match status" value="1"/>
</dbReference>
<sequence length="195" mass="21542">MISTDAVAPAVDVKGEAGDRAATGNIFLVGMMGAGKTTVGRLLSHFLEKTFYDSDREIQKRTGVSIPTIFEIEGEEGFRRRETEILSELMNARNIILATGGGAVLSGVNRAMLKHGGTVIYLRASIDDLWRRTRHDKNRPLLQTSDPRARLAELFVQRDPLYRETAHIVVESGKRSPRHLAQSLAQQLTISSRTG</sequence>
<keyword id="KW-0028">Amino-acid biosynthesis</keyword>
<keyword id="KW-0057">Aromatic amino acid biosynthesis</keyword>
<keyword id="KW-0067">ATP-binding</keyword>
<keyword id="KW-0963">Cytoplasm</keyword>
<keyword id="KW-0418">Kinase</keyword>
<keyword id="KW-0460">Magnesium</keyword>
<keyword id="KW-0479">Metal-binding</keyword>
<keyword id="KW-0547">Nucleotide-binding</keyword>
<keyword id="KW-1185">Reference proteome</keyword>
<keyword id="KW-0808">Transferase</keyword>
<accession>Q2YBB2</accession>
<gene>
    <name evidence="1" type="primary">aroK</name>
    <name type="ordered locus">Nmul_A0652</name>
</gene>
<protein>
    <recommendedName>
        <fullName evidence="1">Shikimate kinase</fullName>
        <shortName evidence="1">SK</shortName>
        <ecNumber evidence="1">2.7.1.71</ecNumber>
    </recommendedName>
</protein>
<proteinExistence type="inferred from homology"/>
<feature type="chain" id="PRO_0000237901" description="Shikimate kinase">
    <location>
        <begin position="1"/>
        <end position="195"/>
    </location>
</feature>
<feature type="binding site" evidence="1">
    <location>
        <begin position="33"/>
        <end position="38"/>
    </location>
    <ligand>
        <name>ATP</name>
        <dbReference type="ChEBI" id="CHEBI:30616"/>
    </ligand>
</feature>
<feature type="binding site" evidence="1">
    <location>
        <position position="37"/>
    </location>
    <ligand>
        <name>Mg(2+)</name>
        <dbReference type="ChEBI" id="CHEBI:18420"/>
    </ligand>
</feature>
<feature type="binding site" evidence="1">
    <location>
        <position position="55"/>
    </location>
    <ligand>
        <name>substrate</name>
    </ligand>
</feature>
<feature type="binding site" evidence="1">
    <location>
        <position position="79"/>
    </location>
    <ligand>
        <name>substrate</name>
    </ligand>
</feature>
<feature type="binding site" evidence="1">
    <location>
        <position position="101"/>
    </location>
    <ligand>
        <name>substrate</name>
    </ligand>
</feature>
<feature type="binding site" evidence="1">
    <location>
        <position position="139"/>
    </location>
    <ligand>
        <name>ATP</name>
        <dbReference type="ChEBI" id="CHEBI:30616"/>
    </ligand>
</feature>
<feature type="binding site" evidence="1">
    <location>
        <position position="158"/>
    </location>
    <ligand>
        <name>substrate</name>
    </ligand>
</feature>
<feature type="binding site" evidence="1">
    <location>
        <position position="175"/>
    </location>
    <ligand>
        <name>ATP</name>
        <dbReference type="ChEBI" id="CHEBI:30616"/>
    </ligand>
</feature>